<gene>
    <name evidence="1" type="primary">rhaM</name>
    <name type="ordered locus">YPN_3344</name>
    <name type="ORF">YP516_3801</name>
</gene>
<dbReference type="EC" id="5.1.3.32" evidence="1"/>
<dbReference type="EMBL" id="CP000305">
    <property type="protein sequence ID" value="ABG19671.1"/>
    <property type="molecule type" value="Genomic_DNA"/>
</dbReference>
<dbReference type="EMBL" id="ACNQ01000017">
    <property type="protein sequence ID" value="EEO75862.1"/>
    <property type="molecule type" value="Genomic_DNA"/>
</dbReference>
<dbReference type="PIR" id="AH0040">
    <property type="entry name" value="AH0040"/>
</dbReference>
<dbReference type="RefSeq" id="WP_002209101.1">
    <property type="nucleotide sequence ID" value="NZ_ACNQ01000017.1"/>
</dbReference>
<dbReference type="SMR" id="Q1CEA9"/>
<dbReference type="GeneID" id="57974279"/>
<dbReference type="KEGG" id="ypn:YPN_3344"/>
<dbReference type="HOGENOM" id="CLU_100689_2_0_6"/>
<dbReference type="UniPathway" id="UPA00125"/>
<dbReference type="Proteomes" id="UP000008936">
    <property type="component" value="Chromosome"/>
</dbReference>
<dbReference type="GO" id="GO:0005737">
    <property type="term" value="C:cytoplasm"/>
    <property type="evidence" value="ECO:0007669"/>
    <property type="project" value="UniProtKB-SubCell"/>
</dbReference>
<dbReference type="GO" id="GO:0062192">
    <property type="term" value="F:L-rhamnose mutarotase activity"/>
    <property type="evidence" value="ECO:0007669"/>
    <property type="project" value="UniProtKB-EC"/>
</dbReference>
<dbReference type="GO" id="GO:0019301">
    <property type="term" value="P:rhamnose catabolic process"/>
    <property type="evidence" value="ECO:0007669"/>
    <property type="project" value="TreeGrafter"/>
</dbReference>
<dbReference type="Gene3D" id="3.30.70.100">
    <property type="match status" value="1"/>
</dbReference>
<dbReference type="HAMAP" id="MF_01663">
    <property type="entry name" value="L_rham_rotase"/>
    <property type="match status" value="1"/>
</dbReference>
<dbReference type="InterPro" id="IPR011008">
    <property type="entry name" value="Dimeric_a/b-barrel"/>
</dbReference>
<dbReference type="InterPro" id="IPR013448">
    <property type="entry name" value="L-rhamnose_mutarotase"/>
</dbReference>
<dbReference type="InterPro" id="IPR008000">
    <property type="entry name" value="Rham/fucose_mutarotase"/>
</dbReference>
<dbReference type="NCBIfam" id="TIGR02625">
    <property type="entry name" value="YiiL_rotase"/>
    <property type="match status" value="1"/>
</dbReference>
<dbReference type="PANTHER" id="PTHR34389">
    <property type="entry name" value="L-RHAMNOSE MUTAROTASE"/>
    <property type="match status" value="1"/>
</dbReference>
<dbReference type="PANTHER" id="PTHR34389:SF2">
    <property type="entry name" value="L-RHAMNOSE MUTAROTASE"/>
    <property type="match status" value="1"/>
</dbReference>
<dbReference type="Pfam" id="PF05336">
    <property type="entry name" value="rhaM"/>
    <property type="match status" value="1"/>
</dbReference>
<dbReference type="SUPFAM" id="SSF54909">
    <property type="entry name" value="Dimeric alpha+beta barrel"/>
    <property type="match status" value="1"/>
</dbReference>
<feature type="chain" id="PRO_0000344615" description="L-rhamnose mutarotase">
    <location>
        <begin position="1"/>
        <end position="104"/>
    </location>
</feature>
<feature type="active site" description="Proton donor" evidence="1">
    <location>
        <position position="22"/>
    </location>
</feature>
<feature type="binding site" evidence="1">
    <location>
        <position position="18"/>
    </location>
    <ligand>
        <name>substrate</name>
    </ligand>
</feature>
<feature type="binding site" evidence="1">
    <location>
        <position position="41"/>
    </location>
    <ligand>
        <name>substrate</name>
    </ligand>
</feature>
<feature type="binding site" evidence="1">
    <location>
        <begin position="76"/>
        <end position="77"/>
    </location>
    <ligand>
        <name>substrate</name>
    </ligand>
</feature>
<evidence type="ECO:0000255" key="1">
    <source>
        <dbReference type="HAMAP-Rule" id="MF_01663"/>
    </source>
</evidence>
<name>RHAM_YERPN</name>
<reference key="1">
    <citation type="journal article" date="2006" name="J. Bacteriol.">
        <title>Complete genome sequence of Yersinia pestis strains Antiqua and Nepal516: evidence of gene reduction in an emerging pathogen.</title>
        <authorList>
            <person name="Chain P.S.G."/>
            <person name="Hu P."/>
            <person name="Malfatti S.A."/>
            <person name="Radnedge L."/>
            <person name="Larimer F."/>
            <person name="Vergez L.M."/>
            <person name="Worsham P."/>
            <person name="Chu M.C."/>
            <person name="Andersen G.L."/>
        </authorList>
    </citation>
    <scope>NUCLEOTIDE SEQUENCE [LARGE SCALE GENOMIC DNA]</scope>
    <source>
        <strain>Nepal516</strain>
    </source>
</reference>
<reference key="2">
    <citation type="submission" date="2009-04" db="EMBL/GenBank/DDBJ databases">
        <title>Yersinia pestis Nepal516A whole genome shotgun sequencing project.</title>
        <authorList>
            <person name="Plunkett G. III"/>
            <person name="Anderson B.D."/>
            <person name="Baumler D.J."/>
            <person name="Burland V."/>
            <person name="Cabot E.L."/>
            <person name="Glasner J.D."/>
            <person name="Mau B."/>
            <person name="Neeno-Eckwall E."/>
            <person name="Perna N.T."/>
            <person name="Munk A.C."/>
            <person name="Tapia R."/>
            <person name="Green L.D."/>
            <person name="Rogers Y.C."/>
            <person name="Detter J.C."/>
            <person name="Bruce D.C."/>
            <person name="Brettin T.S."/>
        </authorList>
    </citation>
    <scope>NUCLEOTIDE SEQUENCE [LARGE SCALE GENOMIC DNA]</scope>
    <source>
        <strain>Nepal516</strain>
    </source>
</reference>
<proteinExistence type="inferred from homology"/>
<protein>
    <recommendedName>
        <fullName evidence="1">L-rhamnose mutarotase</fullName>
        <ecNumber evidence="1">5.1.3.32</ecNumber>
    </recommendedName>
    <alternativeName>
        <fullName evidence="1">Rhamnose 1-epimerase</fullName>
    </alternativeName>
    <alternativeName>
        <fullName evidence="1">Type-3 mutarotase</fullName>
    </alternativeName>
</protein>
<sequence>MIRKAFVMAVNPDAHAEYQRRHTPIWPELESVLKAHGAHHYSIFLDETRNLLFGVVEIESEERWNAVAQTAECQRWWQHMADVMPSHPDNSPVSQALREVFYLE</sequence>
<organism>
    <name type="scientific">Yersinia pestis bv. Antiqua (strain Nepal516)</name>
    <dbReference type="NCBI Taxonomy" id="377628"/>
    <lineage>
        <taxon>Bacteria</taxon>
        <taxon>Pseudomonadati</taxon>
        <taxon>Pseudomonadota</taxon>
        <taxon>Gammaproteobacteria</taxon>
        <taxon>Enterobacterales</taxon>
        <taxon>Yersiniaceae</taxon>
        <taxon>Yersinia</taxon>
    </lineage>
</organism>
<accession>Q1CEA9</accession>
<accession>C4GY62</accession>
<keyword id="KW-0119">Carbohydrate metabolism</keyword>
<keyword id="KW-0963">Cytoplasm</keyword>
<keyword id="KW-0413">Isomerase</keyword>
<keyword id="KW-0684">Rhamnose metabolism</keyword>
<comment type="function">
    <text evidence="1">Involved in the anomeric conversion of L-rhamnose.</text>
</comment>
<comment type="catalytic activity">
    <reaction evidence="1">
        <text>alpha-L-rhamnose = beta-L-rhamnose</text>
        <dbReference type="Rhea" id="RHEA:25584"/>
        <dbReference type="ChEBI" id="CHEBI:27586"/>
        <dbReference type="ChEBI" id="CHEBI:27907"/>
        <dbReference type="EC" id="5.1.3.32"/>
    </reaction>
</comment>
<comment type="pathway">
    <text evidence="1">Carbohydrate metabolism; L-rhamnose metabolism.</text>
</comment>
<comment type="subunit">
    <text evidence="1">Homodimer.</text>
</comment>
<comment type="subcellular location">
    <subcellularLocation>
        <location evidence="1">Cytoplasm</location>
    </subcellularLocation>
</comment>
<comment type="similarity">
    <text evidence="1">Belongs to the rhamnose mutarotase family.</text>
</comment>